<feature type="chain" id="PRO_0000149653" description="Exostosin-like 1">
    <location>
        <begin position="1"/>
        <end position="676"/>
    </location>
</feature>
<feature type="topological domain" description="Cytoplasmic" evidence="3">
    <location>
        <begin position="1"/>
        <end position="9"/>
    </location>
</feature>
<feature type="transmembrane region" description="Helical; Signal-anchor for type II membrane protein" evidence="3">
    <location>
        <begin position="10"/>
        <end position="30"/>
    </location>
</feature>
<feature type="topological domain" description="Lumenal" evidence="3">
    <location>
        <begin position="31"/>
        <end position="676"/>
    </location>
</feature>
<feature type="region of interest" description="Disordered" evidence="4">
    <location>
        <begin position="238"/>
        <end position="264"/>
    </location>
</feature>
<feature type="region of interest" description="Disordered" evidence="4">
    <location>
        <begin position="610"/>
        <end position="631"/>
    </location>
</feature>
<feature type="compositionally biased region" description="Pro residues" evidence="4">
    <location>
        <begin position="618"/>
        <end position="631"/>
    </location>
</feature>
<feature type="glycosylation site" description="N-linked (GlcNAc...) asparagine" evidence="3">
    <location>
        <position position="269"/>
    </location>
</feature>
<feature type="disulfide bond" evidence="2">
    <location>
        <begin position="584"/>
        <end position="634"/>
    </location>
</feature>
<feature type="sequence variant" id="VAR_049228" description="In dbSNP:rs34277678.">
    <original>R</original>
    <variation>H</variation>
    <location>
        <position position="163"/>
    </location>
</feature>
<feature type="sequence variant" id="VAR_012830" description="In dbSNP:rs2736831." evidence="5 6 8">
    <original>H</original>
    <variation>N</variation>
    <location>
        <position position="379"/>
    </location>
</feature>
<gene>
    <name type="primary">EXTL1</name>
    <name type="synonym">EXTL</name>
</gene>
<sequence length="676" mass="74697">MQSWRRRKSLWLALSASWLLLVLLGGFSLLRLALPPRPRPGASQGWPRWLDAELLQSFSQPGELPEDAVSPPQAPHGGSCNWESCFDTSKCRGDGLKVFVYPAVGTISETHRRILASIEGSRFYTFSPAGACLLLLLSLDAQTGECSSMPLQWNRGRNHLVLRLHPAPCPRTFQLGQAMVAEASPTVDSFRPGFDVALPFLPEAHPLRGGAPGQLRQHSPQPGVALLALEEERGGWRTADTGSSACPWDGRCEQDPGPGQTQRQETLPNATFCLISGHRPEAASRFLQALQAGCIPVLLSPRWELPFSEVIDWTKAAIVADERLPLQVLAALQEMSPARVLALRQQTQFLWDAYFSSVEKVIHTTLEVIQDRIFGTSAHPSLLWNSPPGALLALSTFSTSPQDFPFYYLQQGSRPEGRFSALIWVGPPGQPPLKLIQAVAGSQHCAQILVLWSNERPLPSRWPETAVPLTVIDGHRKVSDRFYPYSTIRTDAILSLDARSSLSTSEVDFAFLVWQSFPERMVGFLTSSHFWDEAHGGWGYTAERTNEFSMVLTTAAFYHRYYHTLFTHSLPKALRTLADEAPTCVDVLMNFIVAAVTKLPPIKVPYGKQRQEAAPLAPGGPGPRPKPPAPAPDCINQIAAAFGHMPLLSSRLRLDPVLFKDPVSVQRKKYRSLEKP</sequence>
<protein>
    <recommendedName>
        <fullName>Exostosin-like 1</fullName>
        <ecNumber evidence="7">2.4.1.224</ecNumber>
    </recommendedName>
    <alternativeName>
        <fullName>Exostosin-L</fullName>
    </alternativeName>
    <alternativeName>
        <fullName>Glucuronosyl-N-acetylglucosaminyl-proteoglycan 4-alpha-N-acetylglucosaminyltransferase</fullName>
    </alternativeName>
    <alternativeName>
        <fullName>Multiple exostosis-like protein</fullName>
    </alternativeName>
</protein>
<keyword id="KW-1015">Disulfide bond</keyword>
<keyword id="KW-0256">Endoplasmic reticulum</keyword>
<keyword id="KW-0325">Glycoprotein</keyword>
<keyword id="KW-0328">Glycosyltransferase</keyword>
<keyword id="KW-0472">Membrane</keyword>
<keyword id="KW-1267">Proteomics identification</keyword>
<keyword id="KW-1185">Reference proteome</keyword>
<keyword id="KW-0735">Signal-anchor</keyword>
<keyword id="KW-0808">Transferase</keyword>
<keyword id="KW-0812">Transmembrane</keyword>
<keyword id="KW-1133">Transmembrane helix</keyword>
<name>EXTL1_HUMAN</name>
<proteinExistence type="evidence at protein level"/>
<accession>Q92935</accession>
<accession>Q6GSC1</accession>
<dbReference type="EC" id="2.4.1.224" evidence="7"/>
<dbReference type="EMBL" id="U67191">
    <property type="protein sequence ID" value="AAC51141.1"/>
    <property type="molecule type" value="mRNA"/>
</dbReference>
<dbReference type="EMBL" id="AF083633">
    <property type="protein sequence ID" value="AAD02840.1"/>
    <property type="molecule type" value="Genomic_DNA"/>
</dbReference>
<dbReference type="EMBL" id="AF083623">
    <property type="protein sequence ID" value="AAD02840.1"/>
    <property type="status" value="JOINED"/>
    <property type="molecule type" value="Genomic_DNA"/>
</dbReference>
<dbReference type="EMBL" id="AF083624">
    <property type="protein sequence ID" value="AAD02840.1"/>
    <property type="status" value="JOINED"/>
    <property type="molecule type" value="Genomic_DNA"/>
</dbReference>
<dbReference type="EMBL" id="AF083625">
    <property type="protein sequence ID" value="AAD02840.1"/>
    <property type="status" value="JOINED"/>
    <property type="molecule type" value="Genomic_DNA"/>
</dbReference>
<dbReference type="EMBL" id="AF083626">
    <property type="protein sequence ID" value="AAD02840.1"/>
    <property type="status" value="JOINED"/>
    <property type="molecule type" value="Genomic_DNA"/>
</dbReference>
<dbReference type="EMBL" id="AF083627">
    <property type="protein sequence ID" value="AAD02840.1"/>
    <property type="status" value="JOINED"/>
    <property type="molecule type" value="Genomic_DNA"/>
</dbReference>
<dbReference type="EMBL" id="AF083628">
    <property type="protein sequence ID" value="AAD02840.1"/>
    <property type="status" value="JOINED"/>
    <property type="molecule type" value="Genomic_DNA"/>
</dbReference>
<dbReference type="EMBL" id="AF083629">
    <property type="protein sequence ID" value="AAD02840.1"/>
    <property type="status" value="JOINED"/>
    <property type="molecule type" value="Genomic_DNA"/>
</dbReference>
<dbReference type="EMBL" id="AF083630">
    <property type="protein sequence ID" value="AAD02840.1"/>
    <property type="status" value="JOINED"/>
    <property type="molecule type" value="Genomic_DNA"/>
</dbReference>
<dbReference type="EMBL" id="AF083631">
    <property type="protein sequence ID" value="AAD02840.1"/>
    <property type="status" value="JOINED"/>
    <property type="molecule type" value="Genomic_DNA"/>
</dbReference>
<dbReference type="EMBL" id="AF083632">
    <property type="protein sequence ID" value="AAD02840.1"/>
    <property type="status" value="JOINED"/>
    <property type="molecule type" value="Genomic_DNA"/>
</dbReference>
<dbReference type="EMBL" id="AF153980">
    <property type="protein sequence ID" value="AAF73172.1"/>
    <property type="molecule type" value="Genomic_DNA"/>
</dbReference>
<dbReference type="EMBL" id="AF151391">
    <property type="protein sequence ID" value="AAF73172.1"/>
    <property type="status" value="JOINED"/>
    <property type="molecule type" value="Genomic_DNA"/>
</dbReference>
<dbReference type="EMBL" id="AL391650">
    <property type="status" value="NOT_ANNOTATED_CDS"/>
    <property type="molecule type" value="Genomic_DNA"/>
</dbReference>
<dbReference type="EMBL" id="BC065528">
    <property type="protein sequence ID" value="AAH65528.1"/>
    <property type="molecule type" value="mRNA"/>
</dbReference>
<dbReference type="CCDS" id="CCDS271.1"/>
<dbReference type="RefSeq" id="NP_004446.2">
    <property type="nucleotide sequence ID" value="NM_004455.3"/>
</dbReference>
<dbReference type="SMR" id="Q92935"/>
<dbReference type="BioGRID" id="108435">
    <property type="interactions" value="6"/>
</dbReference>
<dbReference type="FunCoup" id="Q92935">
    <property type="interactions" value="174"/>
</dbReference>
<dbReference type="IntAct" id="Q92935">
    <property type="interactions" value="7"/>
</dbReference>
<dbReference type="STRING" id="9606.ENSP00000363398"/>
<dbReference type="CAZy" id="GT47">
    <property type="family name" value="Glycosyltransferase Family 47"/>
</dbReference>
<dbReference type="CAZy" id="GT64">
    <property type="family name" value="Glycosyltransferase Family 64"/>
</dbReference>
<dbReference type="GlyCosmos" id="Q92935">
    <property type="glycosylation" value="1 site, No reported glycans"/>
</dbReference>
<dbReference type="GlyGen" id="Q92935">
    <property type="glycosylation" value="1 site"/>
</dbReference>
<dbReference type="iPTMnet" id="Q92935"/>
<dbReference type="PhosphoSitePlus" id="Q92935"/>
<dbReference type="BioMuta" id="EXTL1"/>
<dbReference type="DMDM" id="93141259"/>
<dbReference type="jPOST" id="Q92935"/>
<dbReference type="MassIVE" id="Q92935"/>
<dbReference type="PaxDb" id="9606-ENSP00000363398"/>
<dbReference type="PeptideAtlas" id="Q92935"/>
<dbReference type="ProteomicsDB" id="75615"/>
<dbReference type="Antibodypedia" id="30538">
    <property type="antibodies" value="121 antibodies from 24 providers"/>
</dbReference>
<dbReference type="DNASU" id="2134"/>
<dbReference type="Ensembl" id="ENST00000374280.4">
    <property type="protein sequence ID" value="ENSP00000363398.3"/>
    <property type="gene ID" value="ENSG00000158008.10"/>
</dbReference>
<dbReference type="GeneID" id="2134"/>
<dbReference type="KEGG" id="hsa:2134"/>
<dbReference type="MANE-Select" id="ENST00000374280.4">
    <property type="protein sequence ID" value="ENSP00000363398.3"/>
    <property type="RefSeq nucleotide sequence ID" value="NM_004455.3"/>
    <property type="RefSeq protein sequence ID" value="NP_004446.2"/>
</dbReference>
<dbReference type="UCSC" id="uc001blf.4">
    <property type="organism name" value="human"/>
</dbReference>
<dbReference type="AGR" id="HGNC:3515"/>
<dbReference type="CTD" id="2134"/>
<dbReference type="DisGeNET" id="2134"/>
<dbReference type="GeneCards" id="EXTL1"/>
<dbReference type="HGNC" id="HGNC:3515">
    <property type="gene designation" value="EXTL1"/>
</dbReference>
<dbReference type="HPA" id="ENSG00000158008">
    <property type="expression patterns" value="Group enriched (brain, skeletal muscle, tongue)"/>
</dbReference>
<dbReference type="MIM" id="601738">
    <property type="type" value="gene"/>
</dbReference>
<dbReference type="neXtProt" id="NX_Q92935"/>
<dbReference type="OpenTargets" id="ENSG00000158008"/>
<dbReference type="PharmGKB" id="PA27927"/>
<dbReference type="VEuPathDB" id="HostDB:ENSG00000158008"/>
<dbReference type="eggNOG" id="KOG1021">
    <property type="taxonomic scope" value="Eukaryota"/>
</dbReference>
<dbReference type="GeneTree" id="ENSGT00940000161960"/>
<dbReference type="HOGENOM" id="CLU_013906_4_0_1"/>
<dbReference type="InParanoid" id="Q92935"/>
<dbReference type="OMA" id="QWNGGKN"/>
<dbReference type="OrthoDB" id="5954868at2759"/>
<dbReference type="PAN-GO" id="Q92935">
    <property type="GO annotations" value="3 GO annotations based on evolutionary models"/>
</dbReference>
<dbReference type="PhylomeDB" id="Q92935"/>
<dbReference type="TreeFam" id="TF314231"/>
<dbReference type="BioCyc" id="MetaCyc:HS08259-MONOMER"/>
<dbReference type="PathwayCommons" id="Q92935"/>
<dbReference type="Reactome" id="R-HSA-381038">
    <property type="pathway name" value="XBP1(S) activates chaperone genes"/>
</dbReference>
<dbReference type="SignaLink" id="Q92935"/>
<dbReference type="SIGNOR" id="Q92935"/>
<dbReference type="UniPathway" id="UPA00378"/>
<dbReference type="BioGRID-ORCS" id="2134">
    <property type="hits" value="40 hits in 1146 CRISPR screens"/>
</dbReference>
<dbReference type="GeneWiki" id="EXTL1"/>
<dbReference type="GenomeRNAi" id="2134"/>
<dbReference type="Pharos" id="Q92935">
    <property type="development level" value="Tbio"/>
</dbReference>
<dbReference type="PRO" id="PR:Q92935"/>
<dbReference type="Proteomes" id="UP000005640">
    <property type="component" value="Chromosome 1"/>
</dbReference>
<dbReference type="RNAct" id="Q92935">
    <property type="molecule type" value="protein"/>
</dbReference>
<dbReference type="Bgee" id="ENSG00000158008">
    <property type="expression patterns" value="Expressed in right frontal lobe and 120 other cell types or tissues"/>
</dbReference>
<dbReference type="GO" id="GO:0005789">
    <property type="term" value="C:endoplasmic reticulum membrane"/>
    <property type="evidence" value="ECO:0000304"/>
    <property type="project" value="Reactome"/>
</dbReference>
<dbReference type="GO" id="GO:0005794">
    <property type="term" value="C:Golgi apparatus"/>
    <property type="evidence" value="ECO:0000318"/>
    <property type="project" value="GO_Central"/>
</dbReference>
<dbReference type="GO" id="GO:0008375">
    <property type="term" value="F:acetylglucosaminyltransferase activity"/>
    <property type="evidence" value="ECO:0000318"/>
    <property type="project" value="GO_Central"/>
</dbReference>
<dbReference type="GO" id="GO:0050508">
    <property type="term" value="F:glucuronosyl-N-acetylglucosaminyl-proteoglycan 4-alpha-N-acetylglucosaminyltransferase activity"/>
    <property type="evidence" value="ECO:0000314"/>
    <property type="project" value="UniProtKB"/>
</dbReference>
<dbReference type="GO" id="GO:0015020">
    <property type="term" value="F:glucuronosyltransferase activity"/>
    <property type="evidence" value="ECO:0000318"/>
    <property type="project" value="GO_Central"/>
</dbReference>
<dbReference type="GO" id="GO:0015012">
    <property type="term" value="P:heparan sulfate proteoglycan biosynthetic process"/>
    <property type="evidence" value="ECO:0000314"/>
    <property type="project" value="UniProtKB"/>
</dbReference>
<dbReference type="GO" id="GO:0006486">
    <property type="term" value="P:protein glycosylation"/>
    <property type="evidence" value="ECO:0007669"/>
    <property type="project" value="UniProtKB-UniPathway"/>
</dbReference>
<dbReference type="GO" id="GO:0001501">
    <property type="term" value="P:skeletal system development"/>
    <property type="evidence" value="ECO:0000304"/>
    <property type="project" value="ProtInc"/>
</dbReference>
<dbReference type="FunFam" id="3.90.550.10:FF:000109">
    <property type="entry name" value="Exostosin like glycosyltransferase 1"/>
    <property type="match status" value="1"/>
</dbReference>
<dbReference type="Gene3D" id="3.90.550.10">
    <property type="entry name" value="Spore Coat Polysaccharide Biosynthesis Protein SpsA, Chain A"/>
    <property type="match status" value="1"/>
</dbReference>
<dbReference type="InterPro" id="IPR004263">
    <property type="entry name" value="Exostosin"/>
</dbReference>
<dbReference type="InterPro" id="IPR040911">
    <property type="entry name" value="Exostosin_GT47"/>
</dbReference>
<dbReference type="InterPro" id="IPR015338">
    <property type="entry name" value="GT64_dom"/>
</dbReference>
<dbReference type="InterPro" id="IPR029044">
    <property type="entry name" value="Nucleotide-diphossugar_trans"/>
</dbReference>
<dbReference type="PANTHER" id="PTHR48261">
    <property type="entry name" value="ACETYLGLUCOSAMINYLTRANSFERASE"/>
    <property type="match status" value="1"/>
</dbReference>
<dbReference type="PANTHER" id="PTHR48261:SF3">
    <property type="entry name" value="EXOSTOSIN GLYCOSYLTRANSFERASE 1"/>
    <property type="match status" value="1"/>
</dbReference>
<dbReference type="Pfam" id="PF03016">
    <property type="entry name" value="Exostosin_GT47"/>
    <property type="match status" value="1"/>
</dbReference>
<dbReference type="Pfam" id="PF09258">
    <property type="entry name" value="Glyco_transf_64"/>
    <property type="match status" value="1"/>
</dbReference>
<dbReference type="SUPFAM" id="SSF53448">
    <property type="entry name" value="Nucleotide-diphospho-sugar transferases"/>
    <property type="match status" value="1"/>
</dbReference>
<comment type="function">
    <text evidence="7">Glycosyltransferase required for the biosynthesis of heparan-sulfate (HS) (PubMed:11390981). Transfers N-acetyl-alpha-D-glucosamine to the nascent HS chain (GlcNAcT-II activity) (PubMed:11390981). Appears to lack GlcNAcT I and GlcAT-II activities (PubMed:11390981).</text>
</comment>
<comment type="catalytic activity">
    <reaction evidence="7">
        <text>3-O-{[(1-&gt;4)-beta-D-GlcA-(1-&gt;4)-alpha-D-GlcNAc](n)-(1-&gt;4)-beta-D-GlcA-(1-&gt;3)-beta-D-Gal-(1-&gt;3)-beta-D-Gal-(1-&gt;4)-beta-D-Xyl}-L-seryl-[protein] + UDP-N-acetyl-alpha-D-glucosamine = 3-O-{alpha-D-GlcNAc-[(1-&gt;4)-beta-D-GlcA-(1-&gt;4)-alpha-D-GlcNAc](n)-(1-&gt;4)-beta-D-GlcA-(1-&gt;3)-beta-D-Gal-(1-&gt;3)-beta-D-Gal-(1-&gt;4)-beta-D-Xyl}-L-seryl-[protein] + UDP + H(+)</text>
        <dbReference type="Rhea" id="RHEA:16213"/>
        <dbReference type="Rhea" id="RHEA-COMP:12621"/>
        <dbReference type="Rhea" id="RHEA-COMP:12623"/>
        <dbReference type="ChEBI" id="CHEBI:15378"/>
        <dbReference type="ChEBI" id="CHEBI:57705"/>
        <dbReference type="ChEBI" id="CHEBI:58223"/>
        <dbReference type="ChEBI" id="CHEBI:132415"/>
        <dbReference type="ChEBI" id="CHEBI:132416"/>
        <dbReference type="EC" id="2.4.1.224"/>
    </reaction>
</comment>
<comment type="pathway">
    <text evidence="10">Protein modification; protein glycosylation.</text>
</comment>
<comment type="interaction">
    <interactant intactId="EBI-1760167">
        <id>Q92935</id>
    </interactant>
    <interactant intactId="EBI-18341636">
        <id>O95484</id>
        <label>CLDN9</label>
    </interactant>
    <organismsDiffer>false</organismsDiffer>
    <experiments>3</experiments>
</comment>
<comment type="interaction">
    <interactant intactId="EBI-1760167">
        <id>Q92935</id>
    </interactant>
    <interactant intactId="EBI-781551">
        <id>Q9Y282</id>
        <label>ERGIC3</label>
    </interactant>
    <organismsDiffer>false</organismsDiffer>
    <experiments>3</experiments>
</comment>
<comment type="interaction">
    <interactant intactId="EBI-1760167">
        <id>Q92935</id>
    </interactant>
    <interactant intactId="EBI-12142257">
        <id>Q8TBE3</id>
        <label>FNDC9</label>
    </interactant>
    <organismsDiffer>false</organismsDiffer>
    <experiments>3</experiments>
</comment>
<comment type="interaction">
    <interactant intactId="EBI-1760167">
        <id>Q92935</id>
    </interactant>
    <interactant intactId="EBI-8638294">
        <id>Q9NUH8</id>
        <label>TMEM14B</label>
    </interactant>
    <organismsDiffer>false</organismsDiffer>
    <experiments>3</experiments>
</comment>
<comment type="interaction">
    <interactant intactId="EBI-1760167">
        <id>Q92935</id>
    </interactant>
    <interactant intactId="EBI-10982110">
        <id>Q96Q45-2</id>
        <label>TMEM237</label>
    </interactant>
    <organismsDiffer>false</organismsDiffer>
    <experiments>3</experiments>
</comment>
<comment type="subcellular location">
    <subcellularLocation>
        <location evidence="1">Endoplasmic reticulum membrane</location>
        <topology evidence="1">Single-pass type II membrane protein</topology>
    </subcellularLocation>
</comment>
<comment type="similarity">
    <text evidence="9">Belongs to the glycosyltransferase 47 family.</text>
</comment>
<comment type="online information" name="Functional Glycomics Gateway - GTase">
    <link uri="http://www.functionalglycomics.org/glycomics/molecule/jsp/glycoEnzyme/viewGlycoEnzyme.jsp?gbpId=gt_hum_529"/>
    <text>Exostosin-like 1</text>
</comment>
<reference key="1">
    <citation type="journal article" date="1997" name="Genome Res.">
        <title>Identification and localization of the gene for EXTL, a third member of the multiple exostoses gene family.</title>
        <authorList>
            <person name="Wise C.A."/>
            <person name="Clines G.A."/>
            <person name="Massa H."/>
            <person name="Trask B.J."/>
            <person name="Lovett M."/>
        </authorList>
    </citation>
    <scope>NUCLEOTIDE SEQUENCE [MRNA]</scope>
    <scope>VARIANT ASN-379</scope>
</reference>
<reference key="2">
    <citation type="journal article" date="1999" name="Hum. Genet.">
        <title>Mutation analysis of hereditary multiple exostoses in the Chinese.</title>
        <authorList>
            <person name="Xu L."/>
            <person name="Xia J."/>
            <person name="Jiang H."/>
            <person name="Zhou J."/>
            <person name="Li H."/>
            <person name="Wang D."/>
            <person name="Pan Q."/>
            <person name="Long Z."/>
            <person name="Fan C."/>
            <person name="Deng H.-X."/>
        </authorList>
    </citation>
    <scope>NUCLEOTIDE SEQUENCE [GENOMIC DNA]</scope>
    <scope>VARIANT ASN-379</scope>
</reference>
<reference key="3">
    <citation type="journal article" date="1999" name="Cytogenet. Cell Genet.">
        <title>Refined physical mapping and genomic structure of the EXTL1 gene.</title>
        <authorList>
            <person name="Wuyts W."/>
            <person name="Spieker N."/>
            <person name="Van Roy N."/>
            <person name="De Boulle K."/>
            <person name="De Paepe A."/>
            <person name="Willems P.J."/>
            <person name="Van Hul W."/>
            <person name="Versteeg R."/>
            <person name="Speleman F."/>
        </authorList>
    </citation>
    <scope>NUCLEOTIDE SEQUENCE [GENOMIC DNA]</scope>
    <scope>VARIANT ASN-379</scope>
</reference>
<reference key="4">
    <citation type="journal article" date="2006" name="Nature">
        <title>The DNA sequence and biological annotation of human chromosome 1.</title>
        <authorList>
            <person name="Gregory S.G."/>
            <person name="Barlow K.F."/>
            <person name="McLay K.E."/>
            <person name="Kaul R."/>
            <person name="Swarbreck D."/>
            <person name="Dunham A."/>
            <person name="Scott C.E."/>
            <person name="Howe K.L."/>
            <person name="Woodfine K."/>
            <person name="Spencer C.C.A."/>
            <person name="Jones M.C."/>
            <person name="Gillson C."/>
            <person name="Searle S."/>
            <person name="Zhou Y."/>
            <person name="Kokocinski F."/>
            <person name="McDonald L."/>
            <person name="Evans R."/>
            <person name="Phillips K."/>
            <person name="Atkinson A."/>
            <person name="Cooper R."/>
            <person name="Jones C."/>
            <person name="Hall R.E."/>
            <person name="Andrews T.D."/>
            <person name="Lloyd C."/>
            <person name="Ainscough R."/>
            <person name="Almeida J.P."/>
            <person name="Ambrose K.D."/>
            <person name="Anderson F."/>
            <person name="Andrew R.W."/>
            <person name="Ashwell R.I.S."/>
            <person name="Aubin K."/>
            <person name="Babbage A.K."/>
            <person name="Bagguley C.L."/>
            <person name="Bailey J."/>
            <person name="Beasley H."/>
            <person name="Bethel G."/>
            <person name="Bird C.P."/>
            <person name="Bray-Allen S."/>
            <person name="Brown J.Y."/>
            <person name="Brown A.J."/>
            <person name="Buckley D."/>
            <person name="Burton J."/>
            <person name="Bye J."/>
            <person name="Carder C."/>
            <person name="Chapman J.C."/>
            <person name="Clark S.Y."/>
            <person name="Clarke G."/>
            <person name="Clee C."/>
            <person name="Cobley V."/>
            <person name="Collier R.E."/>
            <person name="Corby N."/>
            <person name="Coville G.J."/>
            <person name="Davies J."/>
            <person name="Deadman R."/>
            <person name="Dunn M."/>
            <person name="Earthrowl M."/>
            <person name="Ellington A.G."/>
            <person name="Errington H."/>
            <person name="Frankish A."/>
            <person name="Frankland J."/>
            <person name="French L."/>
            <person name="Garner P."/>
            <person name="Garnett J."/>
            <person name="Gay L."/>
            <person name="Ghori M.R.J."/>
            <person name="Gibson R."/>
            <person name="Gilby L.M."/>
            <person name="Gillett W."/>
            <person name="Glithero R.J."/>
            <person name="Grafham D.V."/>
            <person name="Griffiths C."/>
            <person name="Griffiths-Jones S."/>
            <person name="Grocock R."/>
            <person name="Hammond S."/>
            <person name="Harrison E.S.I."/>
            <person name="Hart E."/>
            <person name="Haugen E."/>
            <person name="Heath P.D."/>
            <person name="Holmes S."/>
            <person name="Holt K."/>
            <person name="Howden P.J."/>
            <person name="Hunt A.R."/>
            <person name="Hunt S.E."/>
            <person name="Hunter G."/>
            <person name="Isherwood J."/>
            <person name="James R."/>
            <person name="Johnson C."/>
            <person name="Johnson D."/>
            <person name="Joy A."/>
            <person name="Kay M."/>
            <person name="Kershaw J.K."/>
            <person name="Kibukawa M."/>
            <person name="Kimberley A.M."/>
            <person name="King A."/>
            <person name="Knights A.J."/>
            <person name="Lad H."/>
            <person name="Laird G."/>
            <person name="Lawlor S."/>
            <person name="Leongamornlert D.A."/>
            <person name="Lloyd D.M."/>
            <person name="Loveland J."/>
            <person name="Lovell J."/>
            <person name="Lush M.J."/>
            <person name="Lyne R."/>
            <person name="Martin S."/>
            <person name="Mashreghi-Mohammadi M."/>
            <person name="Matthews L."/>
            <person name="Matthews N.S.W."/>
            <person name="McLaren S."/>
            <person name="Milne S."/>
            <person name="Mistry S."/>
            <person name="Moore M.J.F."/>
            <person name="Nickerson T."/>
            <person name="O'Dell C.N."/>
            <person name="Oliver K."/>
            <person name="Palmeiri A."/>
            <person name="Palmer S.A."/>
            <person name="Parker A."/>
            <person name="Patel D."/>
            <person name="Pearce A.V."/>
            <person name="Peck A.I."/>
            <person name="Pelan S."/>
            <person name="Phelps K."/>
            <person name="Phillimore B.J."/>
            <person name="Plumb R."/>
            <person name="Rajan J."/>
            <person name="Raymond C."/>
            <person name="Rouse G."/>
            <person name="Saenphimmachak C."/>
            <person name="Sehra H.K."/>
            <person name="Sheridan E."/>
            <person name="Shownkeen R."/>
            <person name="Sims S."/>
            <person name="Skuce C.D."/>
            <person name="Smith M."/>
            <person name="Steward C."/>
            <person name="Subramanian S."/>
            <person name="Sycamore N."/>
            <person name="Tracey A."/>
            <person name="Tromans A."/>
            <person name="Van Helmond Z."/>
            <person name="Wall M."/>
            <person name="Wallis J.M."/>
            <person name="White S."/>
            <person name="Whitehead S.L."/>
            <person name="Wilkinson J.E."/>
            <person name="Willey D.L."/>
            <person name="Williams H."/>
            <person name="Wilming L."/>
            <person name="Wray P.W."/>
            <person name="Wu Z."/>
            <person name="Coulson A."/>
            <person name="Vaudin M."/>
            <person name="Sulston J.E."/>
            <person name="Durbin R.M."/>
            <person name="Hubbard T."/>
            <person name="Wooster R."/>
            <person name="Dunham I."/>
            <person name="Carter N.P."/>
            <person name="McVean G."/>
            <person name="Ross M.T."/>
            <person name="Harrow J."/>
            <person name="Olson M.V."/>
            <person name="Beck S."/>
            <person name="Rogers J."/>
            <person name="Bentley D.R."/>
        </authorList>
    </citation>
    <scope>NUCLEOTIDE SEQUENCE [LARGE SCALE GENOMIC DNA]</scope>
</reference>
<reference key="5">
    <citation type="journal article" date="2004" name="Genome Res.">
        <title>The status, quality, and expansion of the NIH full-length cDNA project: the Mammalian Gene Collection (MGC).</title>
        <authorList>
            <consortium name="The MGC Project Team"/>
        </authorList>
    </citation>
    <scope>NUCLEOTIDE SEQUENCE [LARGE SCALE MRNA]</scope>
    <source>
        <tissue>Skin</tissue>
    </source>
</reference>
<reference key="6">
    <citation type="journal article" date="2001" name="Proc. Natl. Acad. Sci. U.S.A.">
        <title>Human tumor suppressor EXT gene family members EXTL1 and EXTL3 encode alpha 1,4- N-acetylglucosaminyltransferases that likely are involved in heparan sulfate/ heparin biosynthesis.</title>
        <authorList>
            <person name="Kim B.T."/>
            <person name="Kitagawa H."/>
            <person name="Tamura J."/>
            <person name="Saito T."/>
            <person name="Kusche-Gullberg M."/>
            <person name="Lindahl U."/>
            <person name="Sugahara K."/>
        </authorList>
    </citation>
    <scope>FUNCTION</scope>
    <scope>CATALYTIC ACTIVITY</scope>
    <scope>PATHWAY</scope>
</reference>
<evidence type="ECO:0000250" key="1"/>
<evidence type="ECO:0000250" key="2">
    <source>
        <dbReference type="UniProtKB" id="Q9ES89"/>
    </source>
</evidence>
<evidence type="ECO:0000255" key="3"/>
<evidence type="ECO:0000256" key="4">
    <source>
        <dbReference type="SAM" id="MobiDB-lite"/>
    </source>
</evidence>
<evidence type="ECO:0000269" key="5">
    <source>
    </source>
</evidence>
<evidence type="ECO:0000269" key="6">
    <source>
    </source>
</evidence>
<evidence type="ECO:0000269" key="7">
    <source>
    </source>
</evidence>
<evidence type="ECO:0000269" key="8">
    <source>
    </source>
</evidence>
<evidence type="ECO:0000305" key="9"/>
<evidence type="ECO:0000305" key="10">
    <source>
    </source>
</evidence>
<organism>
    <name type="scientific">Homo sapiens</name>
    <name type="common">Human</name>
    <dbReference type="NCBI Taxonomy" id="9606"/>
    <lineage>
        <taxon>Eukaryota</taxon>
        <taxon>Metazoa</taxon>
        <taxon>Chordata</taxon>
        <taxon>Craniata</taxon>
        <taxon>Vertebrata</taxon>
        <taxon>Euteleostomi</taxon>
        <taxon>Mammalia</taxon>
        <taxon>Eutheria</taxon>
        <taxon>Euarchontoglires</taxon>
        <taxon>Primates</taxon>
        <taxon>Haplorrhini</taxon>
        <taxon>Catarrhini</taxon>
        <taxon>Hominidae</taxon>
        <taxon>Homo</taxon>
    </lineage>
</organism>